<name>HUTU_PSEAE</name>
<gene>
    <name evidence="1" type="primary">hutU</name>
    <name type="ordered locus">PA5100</name>
</gene>
<protein>
    <recommendedName>
        <fullName evidence="1">Urocanate hydratase</fullName>
        <shortName evidence="1">Urocanase</shortName>
        <ecNumber evidence="1">4.2.1.49</ecNumber>
    </recommendedName>
    <alternativeName>
        <fullName evidence="1">Imidazolonepropionate hydrolase</fullName>
    </alternativeName>
</protein>
<dbReference type="EC" id="4.2.1.49" evidence="1"/>
<dbReference type="EMBL" id="AE004091">
    <property type="protein sequence ID" value="AAG08485.1"/>
    <property type="molecule type" value="Genomic_DNA"/>
</dbReference>
<dbReference type="PIR" id="E83007">
    <property type="entry name" value="E83007"/>
</dbReference>
<dbReference type="RefSeq" id="NP_253787.1">
    <property type="nucleotide sequence ID" value="NC_002516.2"/>
</dbReference>
<dbReference type="RefSeq" id="WP_010895695.1">
    <property type="nucleotide sequence ID" value="NC_002516.2"/>
</dbReference>
<dbReference type="SMR" id="Q9HU83"/>
<dbReference type="STRING" id="208964.PA5100"/>
<dbReference type="PaxDb" id="208964-PA5100"/>
<dbReference type="GeneID" id="880890"/>
<dbReference type="KEGG" id="pae:PA5100"/>
<dbReference type="PATRIC" id="fig|208964.12.peg.5345"/>
<dbReference type="PseudoCAP" id="PA5100"/>
<dbReference type="HOGENOM" id="CLU_018868_0_1_6"/>
<dbReference type="InParanoid" id="Q9HU83"/>
<dbReference type="OrthoDB" id="9764874at2"/>
<dbReference type="PhylomeDB" id="Q9HU83"/>
<dbReference type="BioCyc" id="PAER208964:G1FZ6-5215-MONOMER"/>
<dbReference type="UniPathway" id="UPA00379">
    <property type="reaction ID" value="UER00550"/>
</dbReference>
<dbReference type="Proteomes" id="UP000002438">
    <property type="component" value="Chromosome"/>
</dbReference>
<dbReference type="GO" id="GO:0005737">
    <property type="term" value="C:cytoplasm"/>
    <property type="evidence" value="ECO:0007669"/>
    <property type="project" value="UniProtKB-SubCell"/>
</dbReference>
<dbReference type="GO" id="GO:0016153">
    <property type="term" value="F:urocanate hydratase activity"/>
    <property type="evidence" value="ECO:0000315"/>
    <property type="project" value="PseudoCAP"/>
</dbReference>
<dbReference type="GO" id="GO:0006548">
    <property type="term" value="P:L-histidine catabolic process"/>
    <property type="evidence" value="ECO:0000315"/>
    <property type="project" value="PseudoCAP"/>
</dbReference>
<dbReference type="GO" id="GO:0019556">
    <property type="term" value="P:L-histidine catabolic process to glutamate and formamide"/>
    <property type="evidence" value="ECO:0007669"/>
    <property type="project" value="UniProtKB-UniPathway"/>
</dbReference>
<dbReference type="GO" id="GO:0019557">
    <property type="term" value="P:L-histidine catabolic process to glutamate and formate"/>
    <property type="evidence" value="ECO:0007669"/>
    <property type="project" value="UniProtKB-UniPathway"/>
</dbReference>
<dbReference type="FunFam" id="3.40.50.10730:FF:000001">
    <property type="entry name" value="Urocanate hydratase"/>
    <property type="match status" value="1"/>
</dbReference>
<dbReference type="Gene3D" id="3.40.50.10730">
    <property type="entry name" value="Urocanase like domains"/>
    <property type="match status" value="1"/>
</dbReference>
<dbReference type="Gene3D" id="3.40.1770.10">
    <property type="entry name" value="Urocanase superfamily"/>
    <property type="match status" value="1"/>
</dbReference>
<dbReference type="HAMAP" id="MF_00577">
    <property type="entry name" value="HutU"/>
    <property type="match status" value="1"/>
</dbReference>
<dbReference type="InterPro" id="IPR055351">
    <property type="entry name" value="Urocanase"/>
</dbReference>
<dbReference type="InterPro" id="IPR023637">
    <property type="entry name" value="Urocanase-like"/>
</dbReference>
<dbReference type="InterPro" id="IPR035401">
    <property type="entry name" value="Urocanase_C"/>
</dbReference>
<dbReference type="InterPro" id="IPR038364">
    <property type="entry name" value="Urocanase_central_sf"/>
</dbReference>
<dbReference type="InterPro" id="IPR023636">
    <property type="entry name" value="Urocanase_CS"/>
</dbReference>
<dbReference type="InterPro" id="IPR035400">
    <property type="entry name" value="Urocanase_N"/>
</dbReference>
<dbReference type="InterPro" id="IPR035085">
    <property type="entry name" value="Urocanase_Rossmann-like"/>
</dbReference>
<dbReference type="InterPro" id="IPR036190">
    <property type="entry name" value="Urocanase_sf"/>
</dbReference>
<dbReference type="NCBIfam" id="TIGR01228">
    <property type="entry name" value="hutU"/>
    <property type="match status" value="1"/>
</dbReference>
<dbReference type="NCBIfam" id="NF003820">
    <property type="entry name" value="PRK05414.1"/>
    <property type="match status" value="1"/>
</dbReference>
<dbReference type="PANTHER" id="PTHR12216">
    <property type="entry name" value="UROCANATE HYDRATASE"/>
    <property type="match status" value="1"/>
</dbReference>
<dbReference type="PANTHER" id="PTHR12216:SF4">
    <property type="entry name" value="UROCANATE HYDRATASE"/>
    <property type="match status" value="1"/>
</dbReference>
<dbReference type="Pfam" id="PF01175">
    <property type="entry name" value="Urocanase"/>
    <property type="match status" value="1"/>
</dbReference>
<dbReference type="Pfam" id="PF17392">
    <property type="entry name" value="Urocanase_C"/>
    <property type="match status" value="1"/>
</dbReference>
<dbReference type="Pfam" id="PF17391">
    <property type="entry name" value="Urocanase_N"/>
    <property type="match status" value="1"/>
</dbReference>
<dbReference type="PIRSF" id="PIRSF001423">
    <property type="entry name" value="Urocanate_hydrat"/>
    <property type="match status" value="1"/>
</dbReference>
<dbReference type="SUPFAM" id="SSF111326">
    <property type="entry name" value="Urocanase"/>
    <property type="match status" value="1"/>
</dbReference>
<dbReference type="PROSITE" id="PS01233">
    <property type="entry name" value="UROCANASE"/>
    <property type="match status" value="1"/>
</dbReference>
<organism>
    <name type="scientific">Pseudomonas aeruginosa (strain ATCC 15692 / DSM 22644 / CIP 104116 / JCM 14847 / LMG 12228 / 1C / PRS 101 / PAO1)</name>
    <dbReference type="NCBI Taxonomy" id="208964"/>
    <lineage>
        <taxon>Bacteria</taxon>
        <taxon>Pseudomonadati</taxon>
        <taxon>Pseudomonadota</taxon>
        <taxon>Gammaproteobacteria</taxon>
        <taxon>Pseudomonadales</taxon>
        <taxon>Pseudomonadaceae</taxon>
        <taxon>Pseudomonas</taxon>
    </lineage>
</organism>
<proteinExistence type="evidence at protein level"/>
<feature type="chain" id="PRO_0000207343" description="Urocanate hydratase">
    <location>
        <begin position="1"/>
        <end position="559"/>
    </location>
</feature>
<feature type="active site" evidence="1">
    <location>
        <position position="411"/>
    </location>
</feature>
<feature type="binding site" evidence="1">
    <location>
        <begin position="53"/>
        <end position="54"/>
    </location>
    <ligand>
        <name>NAD(+)</name>
        <dbReference type="ChEBI" id="CHEBI:57540"/>
    </ligand>
</feature>
<feature type="binding site" evidence="1">
    <location>
        <position position="131"/>
    </location>
    <ligand>
        <name>NAD(+)</name>
        <dbReference type="ChEBI" id="CHEBI:57540"/>
    </ligand>
</feature>
<feature type="binding site" evidence="1">
    <location>
        <begin position="177"/>
        <end position="179"/>
    </location>
    <ligand>
        <name>NAD(+)</name>
        <dbReference type="ChEBI" id="CHEBI:57540"/>
    </ligand>
</feature>
<feature type="binding site" evidence="1">
    <location>
        <position position="197"/>
    </location>
    <ligand>
        <name>NAD(+)</name>
        <dbReference type="ChEBI" id="CHEBI:57540"/>
    </ligand>
</feature>
<feature type="binding site" evidence="1">
    <location>
        <position position="202"/>
    </location>
    <ligand>
        <name>NAD(+)</name>
        <dbReference type="ChEBI" id="CHEBI:57540"/>
    </ligand>
</feature>
<feature type="binding site" evidence="1">
    <location>
        <begin position="243"/>
        <end position="244"/>
    </location>
    <ligand>
        <name>NAD(+)</name>
        <dbReference type="ChEBI" id="CHEBI:57540"/>
    </ligand>
</feature>
<feature type="binding site" evidence="1">
    <location>
        <begin position="264"/>
        <end position="268"/>
    </location>
    <ligand>
        <name>NAD(+)</name>
        <dbReference type="ChEBI" id="CHEBI:57540"/>
    </ligand>
</feature>
<feature type="binding site" evidence="1">
    <location>
        <begin position="274"/>
        <end position="275"/>
    </location>
    <ligand>
        <name>NAD(+)</name>
        <dbReference type="ChEBI" id="CHEBI:57540"/>
    </ligand>
</feature>
<feature type="binding site" evidence="1">
    <location>
        <position position="323"/>
    </location>
    <ligand>
        <name>NAD(+)</name>
        <dbReference type="ChEBI" id="CHEBI:57540"/>
    </ligand>
</feature>
<feature type="binding site" evidence="1">
    <location>
        <position position="493"/>
    </location>
    <ligand>
        <name>NAD(+)</name>
        <dbReference type="ChEBI" id="CHEBI:57540"/>
    </ligand>
</feature>
<reference key="1">
    <citation type="journal article" date="2000" name="Nature">
        <title>Complete genome sequence of Pseudomonas aeruginosa PAO1, an opportunistic pathogen.</title>
        <authorList>
            <person name="Stover C.K."/>
            <person name="Pham X.-Q.T."/>
            <person name="Erwin A.L."/>
            <person name="Mizoguchi S.D."/>
            <person name="Warrener P."/>
            <person name="Hickey M.J."/>
            <person name="Brinkman F.S.L."/>
            <person name="Hufnagle W.O."/>
            <person name="Kowalik D.J."/>
            <person name="Lagrou M."/>
            <person name="Garber R.L."/>
            <person name="Goltry L."/>
            <person name="Tolentino E."/>
            <person name="Westbrock-Wadman S."/>
            <person name="Yuan Y."/>
            <person name="Brody L.L."/>
            <person name="Coulter S.N."/>
            <person name="Folger K.R."/>
            <person name="Kas A."/>
            <person name="Larbig K."/>
            <person name="Lim R.M."/>
            <person name="Smith K.A."/>
            <person name="Spencer D.H."/>
            <person name="Wong G.K.-S."/>
            <person name="Wu Z."/>
            <person name="Paulsen I.T."/>
            <person name="Reizer J."/>
            <person name="Saier M.H. Jr."/>
            <person name="Hancock R.E.W."/>
            <person name="Lory S."/>
            <person name="Olson M.V."/>
        </authorList>
    </citation>
    <scope>NUCLEOTIDE SEQUENCE [LARGE SCALE GENOMIC DNA]</scope>
    <source>
        <strain>ATCC 15692 / DSM 22644 / CIP 104116 / JCM 14847 / LMG 12228 / 1C / PRS 101 / PAO1</strain>
    </source>
</reference>
<reference key="2">
    <citation type="thesis" date="2005" institute="Ben-Gurion University" country="Israel">
        <title>Biofouling in water treatment systems: effect of membrane properties on biofilm formation.</title>
        <authorList>
            <person name="Liddor M."/>
        </authorList>
    </citation>
    <scope>PROTEIN SEQUENCE OF 33-47</scope>
    <source>
        <strain>ATCC 33467 / type 1 smooth</strain>
        <strain>ATCC 33468 / type 2 mucoid</strain>
    </source>
</reference>
<keyword id="KW-0963">Cytoplasm</keyword>
<keyword id="KW-0903">Direct protein sequencing</keyword>
<keyword id="KW-0369">Histidine metabolism</keyword>
<keyword id="KW-0456">Lyase</keyword>
<keyword id="KW-0520">NAD</keyword>
<keyword id="KW-1185">Reference proteome</keyword>
<comment type="function">
    <text evidence="1">Catalyzes the conversion of urocanate to 4-imidazolone-5-propionate.</text>
</comment>
<comment type="catalytic activity">
    <reaction evidence="1">
        <text>4-imidazolone-5-propanoate = trans-urocanate + H2O</text>
        <dbReference type="Rhea" id="RHEA:13101"/>
        <dbReference type="ChEBI" id="CHEBI:15377"/>
        <dbReference type="ChEBI" id="CHEBI:17771"/>
        <dbReference type="ChEBI" id="CHEBI:77893"/>
        <dbReference type="EC" id="4.2.1.49"/>
    </reaction>
</comment>
<comment type="cofactor">
    <cofactor evidence="1">
        <name>NAD(+)</name>
        <dbReference type="ChEBI" id="CHEBI:57540"/>
    </cofactor>
    <text evidence="1">Binds 1 NAD(+) per subunit.</text>
</comment>
<comment type="pathway">
    <text evidence="1">Amino-acid degradation; L-histidine degradation into L-glutamate; N-formimidoyl-L-glutamate from L-histidine: step 2/3.</text>
</comment>
<comment type="subcellular location">
    <subcellularLocation>
        <location evidence="1">Cytoplasm</location>
    </subcellularLocation>
</comment>
<comment type="similarity">
    <text evidence="1">Belongs to the urocanase family.</text>
</comment>
<evidence type="ECO:0000255" key="1">
    <source>
        <dbReference type="HAMAP-Rule" id="MF_00577"/>
    </source>
</evidence>
<accession>Q9HU83</accession>
<sequence>MTTPSKFRDIEIRAPRGTTLTAKSWLTEAPLRMLMNNLDPEVAENPRELVVYGGIGRAARNWECYDRIVETLKQLNDDETLLVQSGKPVGVFKTHANAPRVLIANSNLVPHWATWEHFNELDAKGLAMYGQMTAGSWIYIGSQGIVQGTYETFVEAGRQHYDGNLKGRWVLTAGLGGMGGAQPLAATLAGACSLNIECQQSRIDFRLRSRYVDEQAKDLDDALARIQRYTAEGKAISIALLGNAAEILPELVRRGVRPDMVTDQTSAHDPLNGYLPAGWSWEEYRDRAQTDPAAVVKAAKQSMAVHVRAMLAFQQQGVPTFDYGNNIRQMAKEEGVANAFDFPGFVPAYIRPLFCRGIGPFRWAALSGDPQDIYKTDAKVKQLIPDDAHLHRWLDMARERISFQGLPARICWVGLGLRAKLGLAFNEMVRTGELSAPIVIGRDHLDSGSVASPNRETEAMQDGSDAVSDWPLLNALLNTASGATWVSLHHGGGVGMGFSQHSGMVIVCDGSDEAAERIARVLTNDPGTGVMRHADAGYQVAIDCAKEQGLNLPMITAQR</sequence>